<comment type="function">
    <text evidence="1">Catalyzes the phosphorylation of diacylglycerol (DAG) into phosphatidic acid. Is a key enzyme involved in the production of lipoteichoic acid by reintroducing DAG formed from the breakdown of membrane phospholipids into the phosphatidylglycerol biosynthetic pathway.</text>
</comment>
<comment type="catalytic activity">
    <reaction evidence="1">
        <text>a 1,2-diacyl-sn-glycerol + ATP = a 1,2-diacyl-sn-glycero-3-phosphate + ADP + H(+)</text>
        <dbReference type="Rhea" id="RHEA:10272"/>
        <dbReference type="ChEBI" id="CHEBI:15378"/>
        <dbReference type="ChEBI" id="CHEBI:17815"/>
        <dbReference type="ChEBI" id="CHEBI:30616"/>
        <dbReference type="ChEBI" id="CHEBI:58608"/>
        <dbReference type="ChEBI" id="CHEBI:456216"/>
        <dbReference type="EC" id="2.7.1.107"/>
    </reaction>
</comment>
<comment type="cofactor">
    <cofactor evidence="1">
        <name>Mg(2+)</name>
        <dbReference type="ChEBI" id="CHEBI:18420"/>
    </cofactor>
    <text evidence="1">Binds 1 Mg(2+) ion per subunit. This ion appears to have a structural role and is required for catalytic activity.</text>
</comment>
<comment type="subunit">
    <text evidence="1">Homodimer.</text>
</comment>
<comment type="similarity">
    <text evidence="3">Belongs to the diacylglycerol/lipid kinase family.</text>
</comment>
<accession>Q49YU2</accession>
<dbReference type="EC" id="2.7.1.107" evidence="1"/>
<dbReference type="EMBL" id="AP008934">
    <property type="protein sequence ID" value="BAE18038.1"/>
    <property type="molecule type" value="Genomic_DNA"/>
</dbReference>
<dbReference type="RefSeq" id="WP_002482831.1">
    <property type="nucleotide sequence ID" value="NZ_MTGA01000031.1"/>
</dbReference>
<dbReference type="SMR" id="Q49YU2"/>
<dbReference type="KEGG" id="ssp:SSP0893"/>
<dbReference type="eggNOG" id="COG1597">
    <property type="taxonomic scope" value="Bacteria"/>
</dbReference>
<dbReference type="HOGENOM" id="CLU_045532_1_0_9"/>
<dbReference type="OrthoDB" id="142078at2"/>
<dbReference type="Proteomes" id="UP000006371">
    <property type="component" value="Chromosome"/>
</dbReference>
<dbReference type="GO" id="GO:0005886">
    <property type="term" value="C:plasma membrane"/>
    <property type="evidence" value="ECO:0007669"/>
    <property type="project" value="TreeGrafter"/>
</dbReference>
<dbReference type="GO" id="GO:0005524">
    <property type="term" value="F:ATP binding"/>
    <property type="evidence" value="ECO:0007669"/>
    <property type="project" value="UniProtKB-KW"/>
</dbReference>
<dbReference type="GO" id="GO:0004143">
    <property type="term" value="F:ATP-dependent diacylglycerol kinase activity"/>
    <property type="evidence" value="ECO:0007669"/>
    <property type="project" value="UniProtKB-EC"/>
</dbReference>
<dbReference type="GO" id="GO:0046872">
    <property type="term" value="F:metal ion binding"/>
    <property type="evidence" value="ECO:0007669"/>
    <property type="project" value="UniProtKB-KW"/>
</dbReference>
<dbReference type="GO" id="GO:0008654">
    <property type="term" value="P:phospholipid biosynthetic process"/>
    <property type="evidence" value="ECO:0007669"/>
    <property type="project" value="UniProtKB-KW"/>
</dbReference>
<dbReference type="FunFam" id="2.60.200.40:FF:000015">
    <property type="entry name" value="Diacylglycerol kinase"/>
    <property type="match status" value="1"/>
</dbReference>
<dbReference type="FunFam" id="3.40.50.10330:FF:000008">
    <property type="entry name" value="Probable lipid kinase YegS"/>
    <property type="match status" value="1"/>
</dbReference>
<dbReference type="Gene3D" id="2.60.200.40">
    <property type="match status" value="1"/>
</dbReference>
<dbReference type="Gene3D" id="3.40.50.10330">
    <property type="entry name" value="Probable inorganic polyphosphate/atp-NAD kinase, domain 1"/>
    <property type="match status" value="1"/>
</dbReference>
<dbReference type="InterPro" id="IPR017438">
    <property type="entry name" value="ATP-NAD_kinase_N"/>
</dbReference>
<dbReference type="InterPro" id="IPR005218">
    <property type="entry name" value="Diacylglycerol/lipid_kinase"/>
</dbReference>
<dbReference type="InterPro" id="IPR001206">
    <property type="entry name" value="Diacylglycerol_kinase_cat_dom"/>
</dbReference>
<dbReference type="InterPro" id="IPR050187">
    <property type="entry name" value="Lipid_Phosphate_FormReg"/>
</dbReference>
<dbReference type="InterPro" id="IPR016064">
    <property type="entry name" value="NAD/diacylglycerol_kinase_sf"/>
</dbReference>
<dbReference type="InterPro" id="IPR045540">
    <property type="entry name" value="YegS/DAGK_C"/>
</dbReference>
<dbReference type="NCBIfam" id="NF009603">
    <property type="entry name" value="PRK13055.1"/>
    <property type="match status" value="1"/>
</dbReference>
<dbReference type="NCBIfam" id="NF009874">
    <property type="entry name" value="PRK13337.1"/>
    <property type="match status" value="1"/>
</dbReference>
<dbReference type="NCBIfam" id="TIGR00147">
    <property type="entry name" value="YegS/Rv2252/BmrU family lipid kinase"/>
    <property type="match status" value="1"/>
</dbReference>
<dbReference type="PANTHER" id="PTHR12358:SF106">
    <property type="entry name" value="LIPID KINASE YEGS"/>
    <property type="match status" value="1"/>
</dbReference>
<dbReference type="PANTHER" id="PTHR12358">
    <property type="entry name" value="SPHINGOSINE KINASE"/>
    <property type="match status" value="1"/>
</dbReference>
<dbReference type="Pfam" id="PF00781">
    <property type="entry name" value="DAGK_cat"/>
    <property type="match status" value="1"/>
</dbReference>
<dbReference type="Pfam" id="PF19279">
    <property type="entry name" value="YegS_C"/>
    <property type="match status" value="1"/>
</dbReference>
<dbReference type="SMART" id="SM00046">
    <property type="entry name" value="DAGKc"/>
    <property type="match status" value="1"/>
</dbReference>
<dbReference type="SUPFAM" id="SSF111331">
    <property type="entry name" value="NAD kinase/diacylglycerol kinase-like"/>
    <property type="match status" value="1"/>
</dbReference>
<dbReference type="PROSITE" id="PS50146">
    <property type="entry name" value="DAGK"/>
    <property type="match status" value="1"/>
</dbReference>
<name>DAGK_STAS1</name>
<proteinExistence type="inferred from homology"/>
<feature type="chain" id="PRO_0000386503" description="Diacylglycerol kinase">
    <location>
        <begin position="1"/>
        <end position="305"/>
    </location>
</feature>
<feature type="domain" description="DAGKc" evidence="2">
    <location>
        <begin position="1"/>
        <end position="132"/>
    </location>
</feature>
<feature type="active site" description="Proton acceptor" evidence="1">
    <location>
        <position position="273"/>
    </location>
</feature>
<feature type="binding site" evidence="2">
    <location>
        <begin position="10"/>
        <end position="14"/>
    </location>
    <ligand>
        <name>ATP</name>
        <dbReference type="ChEBI" id="CHEBI:30616"/>
    </ligand>
</feature>
<feature type="binding site" evidence="2">
    <location>
        <position position="41"/>
    </location>
    <ligand>
        <name>ATP</name>
        <dbReference type="ChEBI" id="CHEBI:30616"/>
    </ligand>
</feature>
<feature type="binding site" evidence="2">
    <location>
        <begin position="67"/>
        <end position="73"/>
    </location>
    <ligand>
        <name>ATP</name>
        <dbReference type="ChEBI" id="CHEBI:30616"/>
    </ligand>
</feature>
<feature type="binding site" evidence="2">
    <location>
        <position position="94"/>
    </location>
    <ligand>
        <name>ATP</name>
        <dbReference type="ChEBI" id="CHEBI:30616"/>
    </ligand>
</feature>
<feature type="binding site" evidence="1">
    <location>
        <position position="213"/>
    </location>
    <ligand>
        <name>Mg(2+)</name>
        <dbReference type="ChEBI" id="CHEBI:18420"/>
    </ligand>
</feature>
<feature type="binding site" evidence="1">
    <location>
        <position position="216"/>
    </location>
    <ligand>
        <name>Mg(2+)</name>
        <dbReference type="ChEBI" id="CHEBI:18420"/>
    </ligand>
</feature>
<feature type="binding site" evidence="1">
    <location>
        <position position="218"/>
    </location>
    <ligand>
        <name>Mg(2+)</name>
        <dbReference type="ChEBI" id="CHEBI:18420"/>
    </ligand>
</feature>
<reference key="1">
    <citation type="journal article" date="2005" name="Proc. Natl. Acad. Sci. U.S.A.">
        <title>Whole genome sequence of Staphylococcus saprophyticus reveals the pathogenesis of uncomplicated urinary tract infection.</title>
        <authorList>
            <person name="Kuroda M."/>
            <person name="Yamashita A."/>
            <person name="Hirakawa H."/>
            <person name="Kumano M."/>
            <person name="Morikawa K."/>
            <person name="Higashide M."/>
            <person name="Maruyama A."/>
            <person name="Inose Y."/>
            <person name="Matoba K."/>
            <person name="Toh H."/>
            <person name="Kuhara S."/>
            <person name="Hattori M."/>
            <person name="Ohta T."/>
        </authorList>
    </citation>
    <scope>NUCLEOTIDE SEQUENCE [LARGE SCALE GENOMIC DNA]</scope>
    <source>
        <strain>ATCC 15305 / DSM 20229 / NCIMB 8711 / NCTC 7292 / S-41</strain>
    </source>
</reference>
<evidence type="ECO:0000250" key="1">
    <source>
        <dbReference type="UniProtKB" id="Q6GFF9"/>
    </source>
</evidence>
<evidence type="ECO:0000255" key="2">
    <source>
        <dbReference type="PROSITE-ProRule" id="PRU00783"/>
    </source>
</evidence>
<evidence type="ECO:0000305" key="3"/>
<protein>
    <recommendedName>
        <fullName>Diacylglycerol kinase</fullName>
        <shortName>DAG kinase</shortName>
        <shortName>DAGK</shortName>
        <ecNumber evidence="1">2.7.1.107</ecNumber>
    </recommendedName>
</protein>
<gene>
    <name type="primary">dagK</name>
    <name type="ordered locus">SSP0893</name>
</gene>
<sequence length="305" mass="33743">MRKRARIIYNPTSGKELFKRTLPDVLIKLEKAGFETSAYATEKVGDATTEAARSLEQNYDVLIAAGGDGTLNEVINGIAEKPNRPSLGIIPMGTVNDFGRALHLPTDIMSAIDVIIEGHMTRVDIGKMNSRYFINLAAGGQLTQVSYETPSKLKSIVGPFAYYIKGFEMLPQMKAVDIRIEYDDEVFQGEALLFLLGLTNSMAGFEKLVPDAKLDDGYFTLIIVEKANLAELGHIMTLASRGEHTKHPKVHYKKAKSISVSSFTDMQLNVDGEYGGKLPGNFLNLKQHIEVFTPNDIKNEEIIEQ</sequence>
<keyword id="KW-0067">ATP-binding</keyword>
<keyword id="KW-0418">Kinase</keyword>
<keyword id="KW-0444">Lipid biosynthesis</keyword>
<keyword id="KW-0443">Lipid metabolism</keyword>
<keyword id="KW-0460">Magnesium</keyword>
<keyword id="KW-0479">Metal-binding</keyword>
<keyword id="KW-0547">Nucleotide-binding</keyword>
<keyword id="KW-0594">Phospholipid biosynthesis</keyword>
<keyword id="KW-1208">Phospholipid metabolism</keyword>
<keyword id="KW-1185">Reference proteome</keyword>
<keyword id="KW-0808">Transferase</keyword>
<organism>
    <name type="scientific">Staphylococcus saprophyticus subsp. saprophyticus (strain ATCC 15305 / DSM 20229 / NCIMB 8711 / NCTC 7292 / S-41)</name>
    <dbReference type="NCBI Taxonomy" id="342451"/>
    <lineage>
        <taxon>Bacteria</taxon>
        <taxon>Bacillati</taxon>
        <taxon>Bacillota</taxon>
        <taxon>Bacilli</taxon>
        <taxon>Bacillales</taxon>
        <taxon>Staphylococcaceae</taxon>
        <taxon>Staphylococcus</taxon>
    </lineage>
</organism>